<sequence length="134" mass="15036">MMSVGMLSFENVFFIAFSAYLVVILLMTAVSVYYLLKTLRGGDFALPDSELFKKAGKVVGKSFKDRGLTLHDLLWALELRGAVKMDSQSSKYYSTRPLKVNPEHLESYISAFLIAMNIRSDVTVKNESLIISIN</sequence>
<reference key="1">
    <citation type="journal article" date="1997" name="Nature">
        <title>The complete genome sequence of the hyperthermophilic, sulphate-reducing archaeon Archaeoglobus fulgidus.</title>
        <authorList>
            <person name="Klenk H.-P."/>
            <person name="Clayton R.A."/>
            <person name="Tomb J.-F."/>
            <person name="White O."/>
            <person name="Nelson K.E."/>
            <person name="Ketchum K.A."/>
            <person name="Dodson R.J."/>
            <person name="Gwinn M.L."/>
            <person name="Hickey E.K."/>
            <person name="Peterson J.D."/>
            <person name="Richardson D.L."/>
            <person name="Kerlavage A.R."/>
            <person name="Graham D.E."/>
            <person name="Kyrpides N.C."/>
            <person name="Fleischmann R.D."/>
            <person name="Quackenbush J."/>
            <person name="Lee N.H."/>
            <person name="Sutton G.G."/>
            <person name="Gill S.R."/>
            <person name="Kirkness E.F."/>
            <person name="Dougherty B.A."/>
            <person name="McKenney K."/>
            <person name="Adams M.D."/>
            <person name="Loftus B.J."/>
            <person name="Peterson S.N."/>
            <person name="Reich C.I."/>
            <person name="McNeil L.K."/>
            <person name="Badger J.H."/>
            <person name="Glodek A."/>
            <person name="Zhou L."/>
            <person name="Overbeek R."/>
            <person name="Gocayne J.D."/>
            <person name="Weidman J.F."/>
            <person name="McDonald L.A."/>
            <person name="Utterback T.R."/>
            <person name="Cotton M.D."/>
            <person name="Spriggs T."/>
            <person name="Artiach P."/>
            <person name="Kaine B.P."/>
            <person name="Sykes S.M."/>
            <person name="Sadow P.W."/>
            <person name="D'Andrea K.P."/>
            <person name="Bowman C."/>
            <person name="Fujii C."/>
            <person name="Garland S.A."/>
            <person name="Mason T.M."/>
            <person name="Olsen G.J."/>
            <person name="Fraser C.M."/>
            <person name="Smith H.O."/>
            <person name="Woese C.R."/>
            <person name="Venter J.C."/>
        </authorList>
    </citation>
    <scope>NUCLEOTIDE SEQUENCE [LARGE SCALE GENOMIC DNA]</scope>
    <source>
        <strain>ATCC 49558 / DSM 4304 / JCM 9628 / NBRC 100126 / VC-16</strain>
    </source>
</reference>
<organism>
    <name type="scientific">Archaeoglobus fulgidus (strain ATCC 49558 / DSM 4304 / JCM 9628 / NBRC 100126 / VC-16)</name>
    <dbReference type="NCBI Taxonomy" id="224325"/>
    <lineage>
        <taxon>Archaea</taxon>
        <taxon>Methanobacteriati</taxon>
        <taxon>Methanobacteriota</taxon>
        <taxon>Archaeoglobi</taxon>
        <taxon>Archaeoglobales</taxon>
        <taxon>Archaeoglobaceae</taxon>
        <taxon>Archaeoglobus</taxon>
    </lineage>
</organism>
<comment type="subcellular location">
    <subcellularLocation>
        <location evidence="2">Membrane</location>
        <topology evidence="2">Single-pass membrane protein</topology>
    </subcellularLocation>
</comment>
<keyword id="KW-0472">Membrane</keyword>
<keyword id="KW-1185">Reference proteome</keyword>
<keyword id="KW-0812">Transmembrane</keyword>
<keyword id="KW-1133">Transmembrane helix</keyword>
<proteinExistence type="predicted"/>
<dbReference type="EMBL" id="AE000782">
    <property type="protein sequence ID" value="AAB89698.1"/>
    <property type="molecule type" value="Genomic_DNA"/>
</dbReference>
<dbReference type="PIR" id="G69444">
    <property type="entry name" value="G69444"/>
</dbReference>
<dbReference type="STRING" id="224325.AF_1560"/>
<dbReference type="PaxDb" id="224325-AF_1560"/>
<dbReference type="EnsemblBacteria" id="AAB89698">
    <property type="protein sequence ID" value="AAB89698"/>
    <property type="gene ID" value="AF_1560"/>
</dbReference>
<dbReference type="KEGG" id="afu:AF_1560"/>
<dbReference type="HOGENOM" id="CLU_1901805_0_0_2"/>
<dbReference type="Proteomes" id="UP000002199">
    <property type="component" value="Chromosome"/>
</dbReference>
<dbReference type="GO" id="GO:0016020">
    <property type="term" value="C:membrane"/>
    <property type="evidence" value="ECO:0007669"/>
    <property type="project" value="UniProtKB-SubCell"/>
</dbReference>
<accession>O28712</accession>
<name>Y1560_ARCFU</name>
<evidence type="ECO:0000255" key="1"/>
<evidence type="ECO:0000305" key="2"/>
<protein>
    <recommendedName>
        <fullName>Uncharacterized protein AF_1560</fullName>
    </recommendedName>
</protein>
<feature type="chain" id="PRO_0000128022" description="Uncharacterized protein AF_1560">
    <location>
        <begin position="1"/>
        <end position="134"/>
    </location>
</feature>
<feature type="transmembrane region" description="Helical" evidence="1">
    <location>
        <begin position="13"/>
        <end position="35"/>
    </location>
</feature>
<gene>
    <name type="ordered locus">AF_1560</name>
</gene>